<name>RAC9_GOSHI</name>
<keyword id="KW-0963">Cytoplasm</keyword>
<keyword id="KW-0342">GTP-binding</keyword>
<keyword id="KW-0449">Lipoprotein</keyword>
<keyword id="KW-0472">Membrane</keyword>
<keyword id="KW-0488">Methylation</keyword>
<keyword id="KW-0547">Nucleotide-binding</keyword>
<keyword id="KW-0636">Prenylation</keyword>
<keyword id="KW-1185">Reference proteome</keyword>
<gene>
    <name type="primary">RAC9</name>
</gene>
<sequence>MNTSRFIKCVTVGDGAVGKTCMLISYTSNTFPTDYVPTVFDNFSANVVVDGSTVNLGLWDTAGQEDYNRLRPLSYRGADVFLLAFSLISRASYENVHKKWIPELRHYAPNVPIVLVGTKLDLRDDKQFLSDNPGAISITTSQGEELKKMIGAVTYIECSSKTQQNVKAVFDVAIKIALRPPKPKRKPIKRRSCAFL</sequence>
<protein>
    <recommendedName>
        <fullName>Rac-like GTP-binding protein RAC9</fullName>
    </recommendedName>
</protein>
<evidence type="ECO:0000250" key="1"/>
<evidence type="ECO:0000255" key="2"/>
<evidence type="ECO:0000305" key="3"/>
<proteinExistence type="evidence at transcript level"/>
<reference key="1">
    <citation type="journal article" date="1995" name="Mol. Gen. Genet.">
        <title>Genes encoding small GTP-binding proteins analogous to mammalian rac are preferentially expressed in developing cotton fibers.</title>
        <authorList>
            <person name="Delmer D.P."/>
            <person name="Pear J.R."/>
            <person name="Andrawis A."/>
            <person name="Stalker D.M."/>
        </authorList>
    </citation>
    <scope>NUCLEOTIDE SEQUENCE [MRNA]</scope>
    <source>
        <strain>cv. Acala SJ2</strain>
    </source>
</reference>
<comment type="function">
    <text evidence="1">Inactive GDP-bound Rho GTPases reside in the cytosol, are found in a complex with Rho GDP-dissociation inhibitors (Rho GDIs), and are released from the GDI protein in order to translocate to membranes upon activation.</text>
</comment>
<comment type="subcellular location">
    <subcellularLocation>
        <location evidence="1">Cytoplasm</location>
    </subcellularLocation>
    <subcellularLocation>
        <location evidence="1">Membrane</location>
        <topology evidence="1">Peripheral membrane protein</topology>
    </subcellularLocation>
    <text>Associated with the membrane when activated.</text>
</comment>
<comment type="similarity">
    <text evidence="3">Belongs to the small GTPase superfamily. Rho family.</text>
</comment>
<accession>Q41254</accession>
<dbReference type="EMBL" id="S79309">
    <property type="protein sequence ID" value="AAB35094.1"/>
    <property type="molecule type" value="mRNA"/>
</dbReference>
<dbReference type="PIR" id="S57326">
    <property type="entry name" value="S57326"/>
</dbReference>
<dbReference type="SMR" id="Q41254"/>
<dbReference type="STRING" id="3635.Q41254"/>
<dbReference type="PaxDb" id="3635-Q41254"/>
<dbReference type="Proteomes" id="UP000189702">
    <property type="component" value="Unplaced"/>
</dbReference>
<dbReference type="GO" id="GO:0042995">
    <property type="term" value="C:cell projection"/>
    <property type="evidence" value="ECO:0000318"/>
    <property type="project" value="GO_Central"/>
</dbReference>
<dbReference type="GO" id="GO:0031410">
    <property type="term" value="C:cytoplasmic vesicle"/>
    <property type="evidence" value="ECO:0000318"/>
    <property type="project" value="GO_Central"/>
</dbReference>
<dbReference type="GO" id="GO:0005856">
    <property type="term" value="C:cytoskeleton"/>
    <property type="evidence" value="ECO:0000318"/>
    <property type="project" value="GO_Central"/>
</dbReference>
<dbReference type="GO" id="GO:0005886">
    <property type="term" value="C:plasma membrane"/>
    <property type="evidence" value="ECO:0000318"/>
    <property type="project" value="GO_Central"/>
</dbReference>
<dbReference type="GO" id="GO:0005525">
    <property type="term" value="F:GTP binding"/>
    <property type="evidence" value="ECO:0000318"/>
    <property type="project" value="GO_Central"/>
</dbReference>
<dbReference type="GO" id="GO:0003924">
    <property type="term" value="F:GTPase activity"/>
    <property type="evidence" value="ECO:0000318"/>
    <property type="project" value="GO_Central"/>
</dbReference>
<dbReference type="GO" id="GO:0019901">
    <property type="term" value="F:protein kinase binding"/>
    <property type="evidence" value="ECO:0000318"/>
    <property type="project" value="GO_Central"/>
</dbReference>
<dbReference type="GO" id="GO:0007015">
    <property type="term" value="P:actin filament organization"/>
    <property type="evidence" value="ECO:0000318"/>
    <property type="project" value="GO_Central"/>
</dbReference>
<dbReference type="GO" id="GO:0030865">
    <property type="term" value="P:cortical cytoskeleton organization"/>
    <property type="evidence" value="ECO:0000318"/>
    <property type="project" value="GO_Central"/>
</dbReference>
<dbReference type="GO" id="GO:0007163">
    <property type="term" value="P:establishment or maintenance of cell polarity"/>
    <property type="evidence" value="ECO:0000318"/>
    <property type="project" value="GO_Central"/>
</dbReference>
<dbReference type="GO" id="GO:0009834">
    <property type="term" value="P:plant-type secondary cell wall biogenesis"/>
    <property type="evidence" value="ECO:0000304"/>
    <property type="project" value="AgBase"/>
</dbReference>
<dbReference type="GO" id="GO:0032956">
    <property type="term" value="P:regulation of actin cytoskeleton organization"/>
    <property type="evidence" value="ECO:0000318"/>
    <property type="project" value="GO_Central"/>
</dbReference>
<dbReference type="GO" id="GO:0008360">
    <property type="term" value="P:regulation of cell shape"/>
    <property type="evidence" value="ECO:0000318"/>
    <property type="project" value="GO_Central"/>
</dbReference>
<dbReference type="GO" id="GO:0007165">
    <property type="term" value="P:signal transduction"/>
    <property type="evidence" value="ECO:0000318"/>
    <property type="project" value="GO_Central"/>
</dbReference>
<dbReference type="GO" id="GO:0007264">
    <property type="term" value="P:small GTPase-mediated signal transduction"/>
    <property type="evidence" value="ECO:0007669"/>
    <property type="project" value="InterPro"/>
</dbReference>
<dbReference type="CDD" id="cd04133">
    <property type="entry name" value="Rop_like"/>
    <property type="match status" value="1"/>
</dbReference>
<dbReference type="FunFam" id="3.40.50.300:FF:000535">
    <property type="entry name" value="rac-like GTP-binding protein RAC2"/>
    <property type="match status" value="1"/>
</dbReference>
<dbReference type="Gene3D" id="3.40.50.300">
    <property type="entry name" value="P-loop containing nucleotide triphosphate hydrolases"/>
    <property type="match status" value="1"/>
</dbReference>
<dbReference type="InterPro" id="IPR027417">
    <property type="entry name" value="P-loop_NTPase"/>
</dbReference>
<dbReference type="InterPro" id="IPR005225">
    <property type="entry name" value="Small_GTP-bd"/>
</dbReference>
<dbReference type="InterPro" id="IPR001806">
    <property type="entry name" value="Small_GTPase"/>
</dbReference>
<dbReference type="InterPro" id="IPR003578">
    <property type="entry name" value="Small_GTPase_Rho"/>
</dbReference>
<dbReference type="NCBIfam" id="TIGR00231">
    <property type="entry name" value="small_GTP"/>
    <property type="match status" value="1"/>
</dbReference>
<dbReference type="PANTHER" id="PTHR24072">
    <property type="entry name" value="RHO FAMILY GTPASE"/>
    <property type="match status" value="1"/>
</dbReference>
<dbReference type="Pfam" id="PF00071">
    <property type="entry name" value="Ras"/>
    <property type="match status" value="1"/>
</dbReference>
<dbReference type="PRINTS" id="PR00449">
    <property type="entry name" value="RASTRNSFRMNG"/>
</dbReference>
<dbReference type="SMART" id="SM00175">
    <property type="entry name" value="RAB"/>
    <property type="match status" value="1"/>
</dbReference>
<dbReference type="SMART" id="SM00173">
    <property type="entry name" value="RAS"/>
    <property type="match status" value="1"/>
</dbReference>
<dbReference type="SMART" id="SM00174">
    <property type="entry name" value="RHO"/>
    <property type="match status" value="1"/>
</dbReference>
<dbReference type="SUPFAM" id="SSF52540">
    <property type="entry name" value="P-loop containing nucleoside triphosphate hydrolases"/>
    <property type="match status" value="1"/>
</dbReference>
<dbReference type="PROSITE" id="PS51420">
    <property type="entry name" value="RHO"/>
    <property type="match status" value="1"/>
</dbReference>
<organism>
    <name type="scientific">Gossypium hirsutum</name>
    <name type="common">Upland cotton</name>
    <name type="synonym">Gossypium mexicanum</name>
    <dbReference type="NCBI Taxonomy" id="3635"/>
    <lineage>
        <taxon>Eukaryota</taxon>
        <taxon>Viridiplantae</taxon>
        <taxon>Streptophyta</taxon>
        <taxon>Embryophyta</taxon>
        <taxon>Tracheophyta</taxon>
        <taxon>Spermatophyta</taxon>
        <taxon>Magnoliopsida</taxon>
        <taxon>eudicotyledons</taxon>
        <taxon>Gunneridae</taxon>
        <taxon>Pentapetalae</taxon>
        <taxon>rosids</taxon>
        <taxon>malvids</taxon>
        <taxon>Malvales</taxon>
        <taxon>Malvaceae</taxon>
        <taxon>Malvoideae</taxon>
        <taxon>Gossypium</taxon>
    </lineage>
</organism>
<feature type="chain" id="PRO_0000198927" description="Rac-like GTP-binding protein RAC9">
    <location>
        <begin position="1"/>
        <end position="193"/>
    </location>
</feature>
<feature type="propeptide" id="PRO_0000227589" description="Removed in mature form" evidence="2">
    <location>
        <begin position="194"/>
        <end position="196"/>
    </location>
</feature>
<feature type="short sequence motif" description="Effector region" evidence="2">
    <location>
        <begin position="35"/>
        <end position="43"/>
    </location>
</feature>
<feature type="binding site" evidence="1">
    <location>
        <begin position="13"/>
        <end position="20"/>
    </location>
    <ligand>
        <name>GTP</name>
        <dbReference type="ChEBI" id="CHEBI:37565"/>
    </ligand>
</feature>
<feature type="binding site" evidence="1">
    <location>
        <begin position="60"/>
        <end position="64"/>
    </location>
    <ligand>
        <name>GTP</name>
        <dbReference type="ChEBI" id="CHEBI:37565"/>
    </ligand>
</feature>
<feature type="binding site" evidence="1">
    <location>
        <begin position="118"/>
        <end position="121"/>
    </location>
    <ligand>
        <name>GTP</name>
        <dbReference type="ChEBI" id="CHEBI:37565"/>
    </ligand>
</feature>
<feature type="modified residue" description="Cysteine methyl ester" evidence="2">
    <location>
        <position position="193"/>
    </location>
</feature>
<feature type="lipid moiety-binding region" description="S-geranylgeranyl cysteine" evidence="2">
    <location>
        <position position="193"/>
    </location>
</feature>